<keyword id="KW-0028">Amino-acid biosynthesis</keyword>
<keyword id="KW-0963">Cytoplasm</keyword>
<keyword id="KW-0554">One-carbon metabolism</keyword>
<keyword id="KW-0663">Pyridoxal phosphate</keyword>
<keyword id="KW-0808">Transferase</keyword>
<proteinExistence type="inferred from homology"/>
<organism>
    <name type="scientific">Lactococcus lactis subsp. cremoris (strain SK11)</name>
    <dbReference type="NCBI Taxonomy" id="272622"/>
    <lineage>
        <taxon>Bacteria</taxon>
        <taxon>Bacillati</taxon>
        <taxon>Bacillota</taxon>
        <taxon>Bacilli</taxon>
        <taxon>Lactobacillales</taxon>
        <taxon>Streptococcaceae</taxon>
        <taxon>Lactococcus</taxon>
        <taxon>Lactococcus cremoris subsp. cremoris</taxon>
    </lineage>
</organism>
<reference key="1">
    <citation type="journal article" date="2006" name="Proc. Natl. Acad. Sci. U.S.A.">
        <title>Comparative genomics of the lactic acid bacteria.</title>
        <authorList>
            <person name="Makarova K.S."/>
            <person name="Slesarev A."/>
            <person name="Wolf Y.I."/>
            <person name="Sorokin A."/>
            <person name="Mirkin B."/>
            <person name="Koonin E.V."/>
            <person name="Pavlov A."/>
            <person name="Pavlova N."/>
            <person name="Karamychev V."/>
            <person name="Polouchine N."/>
            <person name="Shakhova V."/>
            <person name="Grigoriev I."/>
            <person name="Lou Y."/>
            <person name="Rohksar D."/>
            <person name="Lucas S."/>
            <person name="Huang K."/>
            <person name="Goodstein D.M."/>
            <person name="Hawkins T."/>
            <person name="Plengvidhya V."/>
            <person name="Welker D."/>
            <person name="Hughes J."/>
            <person name="Goh Y."/>
            <person name="Benson A."/>
            <person name="Baldwin K."/>
            <person name="Lee J.-H."/>
            <person name="Diaz-Muniz I."/>
            <person name="Dosti B."/>
            <person name="Smeianov V."/>
            <person name="Wechter W."/>
            <person name="Barabote R."/>
            <person name="Lorca G."/>
            <person name="Altermann E."/>
            <person name="Barrangou R."/>
            <person name="Ganesan B."/>
            <person name="Xie Y."/>
            <person name="Rawsthorne H."/>
            <person name="Tamir D."/>
            <person name="Parker C."/>
            <person name="Breidt F."/>
            <person name="Broadbent J.R."/>
            <person name="Hutkins R."/>
            <person name="O'Sullivan D."/>
            <person name="Steele J."/>
            <person name="Unlu G."/>
            <person name="Saier M.H. Jr."/>
            <person name="Klaenhammer T."/>
            <person name="Richardson P."/>
            <person name="Kozyavkin S."/>
            <person name="Weimer B.C."/>
            <person name="Mills D.A."/>
        </authorList>
    </citation>
    <scope>NUCLEOTIDE SEQUENCE [LARGE SCALE GENOMIC DNA]</scope>
    <source>
        <strain>SK11</strain>
    </source>
</reference>
<sequence>MIFDKEDFESFDPELWAAIHAEEIRQQQNIELIASENIVSKAVMAAQGSVLTNKYAEGYPGKRYYGGTEAVDVVENLAIDRAKELFGAKFVNVQPHSGSQANAAAYMALIQPGDTVLGMDLNAGGHLTHGASVNFSGKTYHFVPYGVNPQTELLDYEEILKIAKEVQPKLIVAGASAYSRLIDFAKFRQITDSVGAKLMVDMAHIAGLVATDAHPNPLPYADVVTTTTHKTLRGPRGGMILTNDEVLAKKINSAIFPGTQGGPLEHVIAAKAVAFKEALDPEFATYIEQVIKNTQAMADEFAKVEGLRLIAGGSDNHLLNLKVLDLGINGKEAQDLLDSVHITLNKEAIPDETLSPFKTSGVRIGAAAITSRGFKEAEARKVAQLVSNALVNHDNQEKLEEVRKAALELTHQFPL</sequence>
<comment type="function">
    <text evidence="1">Catalyzes the reversible interconversion of serine and glycine with tetrahydrofolate (THF) serving as the one-carbon carrier. This reaction serves as the major source of one-carbon groups required for the biosynthesis of purines, thymidylate, methionine, and other important biomolecules. Also exhibits THF-independent aldolase activity toward beta-hydroxyamino acids, producing glycine and aldehydes, via a retro-aldol mechanism.</text>
</comment>
<comment type="catalytic activity">
    <reaction evidence="1">
        <text>(6R)-5,10-methylene-5,6,7,8-tetrahydrofolate + glycine + H2O = (6S)-5,6,7,8-tetrahydrofolate + L-serine</text>
        <dbReference type="Rhea" id="RHEA:15481"/>
        <dbReference type="ChEBI" id="CHEBI:15377"/>
        <dbReference type="ChEBI" id="CHEBI:15636"/>
        <dbReference type="ChEBI" id="CHEBI:33384"/>
        <dbReference type="ChEBI" id="CHEBI:57305"/>
        <dbReference type="ChEBI" id="CHEBI:57453"/>
        <dbReference type="EC" id="2.1.2.1"/>
    </reaction>
</comment>
<comment type="cofactor">
    <cofactor evidence="1">
        <name>pyridoxal 5'-phosphate</name>
        <dbReference type="ChEBI" id="CHEBI:597326"/>
    </cofactor>
</comment>
<comment type="pathway">
    <text evidence="1">One-carbon metabolism; tetrahydrofolate interconversion.</text>
</comment>
<comment type="pathway">
    <text evidence="1">Amino-acid biosynthesis; glycine biosynthesis; glycine from L-serine: step 1/1.</text>
</comment>
<comment type="subunit">
    <text evidence="1">Homodimer.</text>
</comment>
<comment type="subcellular location">
    <subcellularLocation>
        <location evidence="1">Cytoplasm</location>
    </subcellularLocation>
</comment>
<comment type="similarity">
    <text evidence="1">Belongs to the SHMT family.</text>
</comment>
<gene>
    <name evidence="1" type="primary">glyA</name>
    <name type="ordered locus">LACR_0617</name>
</gene>
<dbReference type="EC" id="2.1.2.1" evidence="1"/>
<dbReference type="EMBL" id="CP000425">
    <property type="protein sequence ID" value="ABJ72185.1"/>
    <property type="molecule type" value="Genomic_DNA"/>
</dbReference>
<dbReference type="RefSeq" id="WP_011675602.1">
    <property type="nucleotide sequence ID" value="NC_008527.1"/>
</dbReference>
<dbReference type="SMR" id="Q031D7"/>
<dbReference type="KEGG" id="llc:LACR_0617"/>
<dbReference type="HOGENOM" id="CLU_022477_2_1_9"/>
<dbReference type="UniPathway" id="UPA00193"/>
<dbReference type="UniPathway" id="UPA00288">
    <property type="reaction ID" value="UER01023"/>
</dbReference>
<dbReference type="Proteomes" id="UP000000240">
    <property type="component" value="Chromosome"/>
</dbReference>
<dbReference type="GO" id="GO:0005829">
    <property type="term" value="C:cytosol"/>
    <property type="evidence" value="ECO:0007669"/>
    <property type="project" value="TreeGrafter"/>
</dbReference>
<dbReference type="GO" id="GO:0004372">
    <property type="term" value="F:glycine hydroxymethyltransferase activity"/>
    <property type="evidence" value="ECO:0007669"/>
    <property type="project" value="UniProtKB-UniRule"/>
</dbReference>
<dbReference type="GO" id="GO:0030170">
    <property type="term" value="F:pyridoxal phosphate binding"/>
    <property type="evidence" value="ECO:0007669"/>
    <property type="project" value="UniProtKB-UniRule"/>
</dbReference>
<dbReference type="GO" id="GO:0019264">
    <property type="term" value="P:glycine biosynthetic process from serine"/>
    <property type="evidence" value="ECO:0007669"/>
    <property type="project" value="UniProtKB-UniRule"/>
</dbReference>
<dbReference type="GO" id="GO:0035999">
    <property type="term" value="P:tetrahydrofolate interconversion"/>
    <property type="evidence" value="ECO:0007669"/>
    <property type="project" value="UniProtKB-UniRule"/>
</dbReference>
<dbReference type="CDD" id="cd00378">
    <property type="entry name" value="SHMT"/>
    <property type="match status" value="1"/>
</dbReference>
<dbReference type="FunFam" id="3.40.640.10:FF:000001">
    <property type="entry name" value="Serine hydroxymethyltransferase"/>
    <property type="match status" value="1"/>
</dbReference>
<dbReference type="Gene3D" id="3.90.1150.10">
    <property type="entry name" value="Aspartate Aminotransferase, domain 1"/>
    <property type="match status" value="1"/>
</dbReference>
<dbReference type="Gene3D" id="3.40.640.10">
    <property type="entry name" value="Type I PLP-dependent aspartate aminotransferase-like (Major domain)"/>
    <property type="match status" value="1"/>
</dbReference>
<dbReference type="HAMAP" id="MF_00051">
    <property type="entry name" value="SHMT"/>
    <property type="match status" value="1"/>
</dbReference>
<dbReference type="InterPro" id="IPR015424">
    <property type="entry name" value="PyrdxlP-dep_Trfase"/>
</dbReference>
<dbReference type="InterPro" id="IPR015421">
    <property type="entry name" value="PyrdxlP-dep_Trfase_major"/>
</dbReference>
<dbReference type="InterPro" id="IPR015422">
    <property type="entry name" value="PyrdxlP-dep_Trfase_small"/>
</dbReference>
<dbReference type="InterPro" id="IPR001085">
    <property type="entry name" value="Ser_HO-MeTrfase"/>
</dbReference>
<dbReference type="InterPro" id="IPR049943">
    <property type="entry name" value="Ser_HO-MeTrfase-like"/>
</dbReference>
<dbReference type="InterPro" id="IPR019798">
    <property type="entry name" value="Ser_HO-MeTrfase_PLP_BS"/>
</dbReference>
<dbReference type="InterPro" id="IPR039429">
    <property type="entry name" value="SHMT-like_dom"/>
</dbReference>
<dbReference type="NCBIfam" id="NF000586">
    <property type="entry name" value="PRK00011.1"/>
    <property type="match status" value="1"/>
</dbReference>
<dbReference type="PANTHER" id="PTHR11680">
    <property type="entry name" value="SERINE HYDROXYMETHYLTRANSFERASE"/>
    <property type="match status" value="1"/>
</dbReference>
<dbReference type="PANTHER" id="PTHR11680:SF35">
    <property type="entry name" value="SERINE HYDROXYMETHYLTRANSFERASE 1"/>
    <property type="match status" value="1"/>
</dbReference>
<dbReference type="Pfam" id="PF00464">
    <property type="entry name" value="SHMT"/>
    <property type="match status" value="1"/>
</dbReference>
<dbReference type="PIRSF" id="PIRSF000412">
    <property type="entry name" value="SHMT"/>
    <property type="match status" value="1"/>
</dbReference>
<dbReference type="SUPFAM" id="SSF53383">
    <property type="entry name" value="PLP-dependent transferases"/>
    <property type="match status" value="1"/>
</dbReference>
<dbReference type="PROSITE" id="PS00096">
    <property type="entry name" value="SHMT"/>
    <property type="match status" value="1"/>
</dbReference>
<name>GLYA_LACLS</name>
<evidence type="ECO:0000255" key="1">
    <source>
        <dbReference type="HAMAP-Rule" id="MF_00051"/>
    </source>
</evidence>
<accession>Q031D7</accession>
<feature type="chain" id="PRO_1000006272" description="Serine hydroxymethyltransferase">
    <location>
        <begin position="1"/>
        <end position="415"/>
    </location>
</feature>
<feature type="binding site" evidence="1">
    <location>
        <position position="121"/>
    </location>
    <ligand>
        <name>(6S)-5,6,7,8-tetrahydrofolate</name>
        <dbReference type="ChEBI" id="CHEBI:57453"/>
    </ligand>
</feature>
<feature type="binding site" evidence="1">
    <location>
        <begin position="125"/>
        <end position="127"/>
    </location>
    <ligand>
        <name>(6S)-5,6,7,8-tetrahydrofolate</name>
        <dbReference type="ChEBI" id="CHEBI:57453"/>
    </ligand>
</feature>
<feature type="binding site" evidence="1">
    <location>
        <begin position="355"/>
        <end position="357"/>
    </location>
    <ligand>
        <name>(6S)-5,6,7,8-tetrahydrofolate</name>
        <dbReference type="ChEBI" id="CHEBI:57453"/>
    </ligand>
</feature>
<feature type="site" description="Plays an important role in substrate specificity" evidence="1">
    <location>
        <position position="229"/>
    </location>
</feature>
<feature type="modified residue" description="N6-(pyridoxal phosphate)lysine" evidence="1">
    <location>
        <position position="230"/>
    </location>
</feature>
<protein>
    <recommendedName>
        <fullName evidence="1">Serine hydroxymethyltransferase</fullName>
        <shortName evidence="1">SHMT</shortName>
        <shortName evidence="1">Serine methylase</shortName>
        <ecNumber evidence="1">2.1.2.1</ecNumber>
    </recommendedName>
</protein>